<sequence length="779" mass="87366">METDVTSDTVEVLPQHKFDLRSLEAYLNQHLPGFGSDSRAVLTVTQYRSGQSNPTFFLQKGSQAYVLRKKPPGSLLPKAHKIDREFKIQKALFSIGFPVAKPLLYCRDASVIGTEFYVMEHVQGRIFRDFSIPGVSSAERAAIYVSVAETLAWLHSLDIRSLKLDKYGTGVGYCKRQVSTWTKQYQASAHQSIPAMDQLSTWLMKNLPDSDSEECLVHGDFKLDNIVFHPKECRVIAVLDWELSTFGHPLTDLAHLSLFYYWPRTLPMINRGSHIPENTGIPLMEELISIYCHRRGIDPNLPNWNFFMALSFFKLAGISQGVYRRYLMGNNSSEDSFLTANTVQPLAETGLQLSKRTLRTTPPQADAKSQLFAQSRRGQEVLTRVKQFMKQHVFPAEKEVAEYYAQSGNSAEKWGHPLVIEKLKEMAKAEGLWNLFLPAVSGLSQVDYALIAEETGKCFFAPDVFNCQAPDTGNMEVLHLYGSEQQKKQWLEPLLRGDITSVFCMTEPNVSSSDATNIECTIQRDGGGYIVNGKKWWSSGAGNPKCKIAIVLGRTESPSASRHRQHSMILVPMDTPGVELIRPLSVFGYMDNMHGGHWEVHFNHVRVPASNLILGEGRGFEISQGRLGPGRIHHCMRTVGLAERILQIMCDRAVQREAFKKKLYEHEVVAHWIAKSRIAIEEIRLLTLKAAHSIDTLGSASARKEIAMIKVAAPKAVCKIADWAIQVHGGAGVSQDYPLANMYAIIRTLRLADGPDEVHLSAIAKMELQDQARRLTARM</sequence>
<protein>
    <recommendedName>
        <fullName>Acyl-CoA dehydrogenase family member 11</fullName>
        <shortName>ACAD-11</shortName>
        <ecNumber evidence="2">1.3.8.-</ecNumber>
    </recommendedName>
</protein>
<organism>
    <name type="scientific">Mus musculus</name>
    <name type="common">Mouse</name>
    <dbReference type="NCBI Taxonomy" id="10090"/>
    <lineage>
        <taxon>Eukaryota</taxon>
        <taxon>Metazoa</taxon>
        <taxon>Chordata</taxon>
        <taxon>Craniata</taxon>
        <taxon>Vertebrata</taxon>
        <taxon>Euteleostomi</taxon>
        <taxon>Mammalia</taxon>
        <taxon>Eutheria</taxon>
        <taxon>Euarchontoglires</taxon>
        <taxon>Glires</taxon>
        <taxon>Rodentia</taxon>
        <taxon>Myomorpha</taxon>
        <taxon>Muroidea</taxon>
        <taxon>Muridae</taxon>
        <taxon>Murinae</taxon>
        <taxon>Mus</taxon>
        <taxon>Mus</taxon>
    </lineage>
</organism>
<evidence type="ECO:0000250" key="1"/>
<evidence type="ECO:0000250" key="2">
    <source>
        <dbReference type="UniProtKB" id="Q709F0"/>
    </source>
</evidence>
<evidence type="ECO:0000269" key="3">
    <source>
    </source>
</evidence>
<evidence type="ECO:0000305" key="4"/>
<evidence type="ECO:0007744" key="5">
    <source>
    </source>
</evidence>
<evidence type="ECO:0007744" key="6">
    <source>
    </source>
</evidence>
<evidence type="ECO:0007744" key="7">
    <source>
    </source>
</evidence>
<dbReference type="EC" id="1.3.8.-" evidence="2"/>
<dbReference type="EMBL" id="AK077531">
    <property type="protein sequence ID" value="BAC36849.2"/>
    <property type="molecule type" value="mRNA"/>
</dbReference>
<dbReference type="EMBL" id="AK145561">
    <property type="protein sequence ID" value="BAE26511.1"/>
    <property type="molecule type" value="mRNA"/>
</dbReference>
<dbReference type="EMBL" id="AK145834">
    <property type="protein sequence ID" value="BAE26684.1"/>
    <property type="molecule type" value="mRNA"/>
</dbReference>
<dbReference type="EMBL" id="BC045199">
    <property type="protein sequence ID" value="AAH45199.1"/>
    <property type="molecule type" value="mRNA"/>
</dbReference>
<dbReference type="CCDS" id="CCDS23458.1"/>
<dbReference type="RefSeq" id="NP_780533.2">
    <property type="nucleotide sequence ID" value="NM_175324.3"/>
</dbReference>
<dbReference type="SMR" id="Q80XL6"/>
<dbReference type="BioGRID" id="221913">
    <property type="interactions" value="17"/>
</dbReference>
<dbReference type="FunCoup" id="Q80XL6">
    <property type="interactions" value="839"/>
</dbReference>
<dbReference type="STRING" id="10090.ENSMUSP00000043424"/>
<dbReference type="GlyGen" id="Q80XL6">
    <property type="glycosylation" value="1 site, 1 O-linked glycan (1 site)"/>
</dbReference>
<dbReference type="iPTMnet" id="Q80XL6"/>
<dbReference type="PhosphoSitePlus" id="Q80XL6"/>
<dbReference type="SwissPalm" id="Q80XL6"/>
<dbReference type="jPOST" id="Q80XL6"/>
<dbReference type="PaxDb" id="10090-ENSMUSP00000043424"/>
<dbReference type="PeptideAtlas" id="Q80XL6"/>
<dbReference type="ProteomicsDB" id="285536"/>
<dbReference type="Pumba" id="Q80XL6"/>
<dbReference type="GeneID" id="102632"/>
<dbReference type="KEGG" id="mmu:102632"/>
<dbReference type="UCSC" id="uc009rhg.1">
    <property type="organism name" value="mouse"/>
</dbReference>
<dbReference type="AGR" id="MGI:2143169"/>
<dbReference type="CTD" id="84129"/>
<dbReference type="MGI" id="MGI:2143169">
    <property type="gene designation" value="Acad11"/>
</dbReference>
<dbReference type="eggNOG" id="KOG1469">
    <property type="taxonomic scope" value="Eukaryota"/>
</dbReference>
<dbReference type="InParanoid" id="Q80XL6"/>
<dbReference type="OrthoDB" id="434771at2759"/>
<dbReference type="PhylomeDB" id="Q80XL6"/>
<dbReference type="TreeFam" id="TF333953"/>
<dbReference type="Reactome" id="R-MMU-77289">
    <property type="pathway name" value="Mitochondrial Fatty Acid Beta-Oxidation"/>
</dbReference>
<dbReference type="UniPathway" id="UPA00659"/>
<dbReference type="BioGRID-ORCS" id="102632">
    <property type="hits" value="3 hits in 80 CRISPR screens"/>
</dbReference>
<dbReference type="ChiTaRS" id="Acad11">
    <property type="organism name" value="mouse"/>
</dbReference>
<dbReference type="PRO" id="PR:Q80XL6"/>
<dbReference type="Proteomes" id="UP000000589">
    <property type="component" value="Unplaced"/>
</dbReference>
<dbReference type="RNAct" id="Q80XL6">
    <property type="molecule type" value="protein"/>
</dbReference>
<dbReference type="GO" id="GO:0031966">
    <property type="term" value="C:mitochondrial membrane"/>
    <property type="evidence" value="ECO:0007669"/>
    <property type="project" value="UniProtKB-SubCell"/>
</dbReference>
<dbReference type="GO" id="GO:0005739">
    <property type="term" value="C:mitochondrion"/>
    <property type="evidence" value="ECO:0007005"/>
    <property type="project" value="MGI"/>
</dbReference>
<dbReference type="GO" id="GO:0005777">
    <property type="term" value="C:peroxisome"/>
    <property type="evidence" value="ECO:0000250"/>
    <property type="project" value="HGNC"/>
</dbReference>
<dbReference type="GO" id="GO:0003995">
    <property type="term" value="F:acyl-CoA dehydrogenase activity"/>
    <property type="evidence" value="ECO:0007669"/>
    <property type="project" value="RHEA"/>
</dbReference>
<dbReference type="GO" id="GO:0050660">
    <property type="term" value="F:flavin adenine dinucleotide binding"/>
    <property type="evidence" value="ECO:0007669"/>
    <property type="project" value="InterPro"/>
</dbReference>
<dbReference type="GO" id="GO:0006635">
    <property type="term" value="P:fatty acid beta-oxidation"/>
    <property type="evidence" value="ECO:0007669"/>
    <property type="project" value="UniProtKB-UniPathway"/>
</dbReference>
<dbReference type="CDD" id="cd05154">
    <property type="entry name" value="ACAD10_11_N-like"/>
    <property type="match status" value="1"/>
</dbReference>
<dbReference type="CDD" id="cd01155">
    <property type="entry name" value="ACAD_FadE2"/>
    <property type="match status" value="1"/>
</dbReference>
<dbReference type="FunFam" id="2.40.110.10:FF:000002">
    <property type="entry name" value="Acyl-CoA dehydrogenase fadE12"/>
    <property type="match status" value="1"/>
</dbReference>
<dbReference type="FunFam" id="1.20.140.10:FF:000018">
    <property type="entry name" value="Acyl-CoA dehydrogenase family member 10"/>
    <property type="match status" value="1"/>
</dbReference>
<dbReference type="FunFam" id="3.30.200.20:FF:000343">
    <property type="entry name" value="Acyl-CoA dehydrogenase family member 10"/>
    <property type="match status" value="1"/>
</dbReference>
<dbReference type="FunFam" id="3.90.1200.10:FF:000009">
    <property type="entry name" value="Acyl-CoA dehydrogenase family member 11"/>
    <property type="match status" value="1"/>
</dbReference>
<dbReference type="Gene3D" id="3.90.1200.10">
    <property type="match status" value="1"/>
</dbReference>
<dbReference type="Gene3D" id="1.10.540.10">
    <property type="entry name" value="Acyl-CoA dehydrogenase/oxidase, N-terminal domain"/>
    <property type="match status" value="1"/>
</dbReference>
<dbReference type="Gene3D" id="2.40.110.10">
    <property type="entry name" value="Butyryl-CoA Dehydrogenase, subunit A, domain 2"/>
    <property type="match status" value="1"/>
</dbReference>
<dbReference type="Gene3D" id="1.20.140.10">
    <property type="entry name" value="Butyryl-CoA Dehydrogenase, subunit A, domain 3"/>
    <property type="match status" value="1"/>
</dbReference>
<dbReference type="Gene3D" id="3.30.200.20">
    <property type="entry name" value="Phosphorylase Kinase, domain 1"/>
    <property type="match status" value="1"/>
</dbReference>
<dbReference type="InterPro" id="IPR041726">
    <property type="entry name" value="ACAD10_11_N"/>
</dbReference>
<dbReference type="InterPro" id="IPR050741">
    <property type="entry name" value="Acyl-CoA_dehydrogenase"/>
</dbReference>
<dbReference type="InterPro" id="IPR006091">
    <property type="entry name" value="Acyl-CoA_Oxase/DH_mid-dom"/>
</dbReference>
<dbReference type="InterPro" id="IPR046373">
    <property type="entry name" value="Acyl-CoA_Oxase/DH_mid-dom_sf"/>
</dbReference>
<dbReference type="InterPro" id="IPR036250">
    <property type="entry name" value="AcylCo_DH-like_C"/>
</dbReference>
<dbReference type="InterPro" id="IPR009075">
    <property type="entry name" value="AcylCo_DH/oxidase_C"/>
</dbReference>
<dbReference type="InterPro" id="IPR013786">
    <property type="entry name" value="AcylCoA_DH/ox_N"/>
</dbReference>
<dbReference type="InterPro" id="IPR037069">
    <property type="entry name" value="AcylCoA_DH/ox_N_sf"/>
</dbReference>
<dbReference type="InterPro" id="IPR009100">
    <property type="entry name" value="AcylCoA_DH/oxidase_NM_dom_sf"/>
</dbReference>
<dbReference type="InterPro" id="IPR002575">
    <property type="entry name" value="Aminoglycoside_PTrfase"/>
</dbReference>
<dbReference type="InterPro" id="IPR011009">
    <property type="entry name" value="Kinase-like_dom_sf"/>
</dbReference>
<dbReference type="PANTHER" id="PTHR48083:SF13">
    <property type="entry name" value="ACYL-COA DEHYDROGENASE FAMILY MEMBER 11"/>
    <property type="match status" value="1"/>
</dbReference>
<dbReference type="PANTHER" id="PTHR48083">
    <property type="entry name" value="MEDIUM-CHAIN SPECIFIC ACYL-COA DEHYDROGENASE, MITOCHONDRIAL-RELATED"/>
    <property type="match status" value="1"/>
</dbReference>
<dbReference type="Pfam" id="PF00441">
    <property type="entry name" value="Acyl-CoA_dh_1"/>
    <property type="match status" value="1"/>
</dbReference>
<dbReference type="Pfam" id="PF02770">
    <property type="entry name" value="Acyl-CoA_dh_M"/>
    <property type="match status" value="1"/>
</dbReference>
<dbReference type="Pfam" id="PF02771">
    <property type="entry name" value="Acyl-CoA_dh_N"/>
    <property type="match status" value="1"/>
</dbReference>
<dbReference type="Pfam" id="PF01636">
    <property type="entry name" value="APH"/>
    <property type="match status" value="1"/>
</dbReference>
<dbReference type="SUPFAM" id="SSF47203">
    <property type="entry name" value="Acyl-CoA dehydrogenase C-terminal domain-like"/>
    <property type="match status" value="1"/>
</dbReference>
<dbReference type="SUPFAM" id="SSF56645">
    <property type="entry name" value="Acyl-CoA dehydrogenase NM domain-like"/>
    <property type="match status" value="1"/>
</dbReference>
<dbReference type="SUPFAM" id="SSF56112">
    <property type="entry name" value="Protein kinase-like (PK-like)"/>
    <property type="match status" value="1"/>
</dbReference>
<gene>
    <name type="primary">Acad11</name>
</gene>
<accession>Q80XL6</accession>
<accession>Q8BK19</accession>
<name>ACD11_MOUSE</name>
<reference key="1">
    <citation type="journal article" date="2005" name="Science">
        <title>The transcriptional landscape of the mammalian genome.</title>
        <authorList>
            <person name="Carninci P."/>
            <person name="Kasukawa T."/>
            <person name="Katayama S."/>
            <person name="Gough J."/>
            <person name="Frith M.C."/>
            <person name="Maeda N."/>
            <person name="Oyama R."/>
            <person name="Ravasi T."/>
            <person name="Lenhard B."/>
            <person name="Wells C."/>
            <person name="Kodzius R."/>
            <person name="Shimokawa K."/>
            <person name="Bajic V.B."/>
            <person name="Brenner S.E."/>
            <person name="Batalov S."/>
            <person name="Forrest A.R."/>
            <person name="Zavolan M."/>
            <person name="Davis M.J."/>
            <person name="Wilming L.G."/>
            <person name="Aidinis V."/>
            <person name="Allen J.E."/>
            <person name="Ambesi-Impiombato A."/>
            <person name="Apweiler R."/>
            <person name="Aturaliya R.N."/>
            <person name="Bailey T.L."/>
            <person name="Bansal M."/>
            <person name="Baxter L."/>
            <person name="Beisel K.W."/>
            <person name="Bersano T."/>
            <person name="Bono H."/>
            <person name="Chalk A.M."/>
            <person name="Chiu K.P."/>
            <person name="Choudhary V."/>
            <person name="Christoffels A."/>
            <person name="Clutterbuck D.R."/>
            <person name="Crowe M.L."/>
            <person name="Dalla E."/>
            <person name="Dalrymple B.P."/>
            <person name="de Bono B."/>
            <person name="Della Gatta G."/>
            <person name="di Bernardo D."/>
            <person name="Down T."/>
            <person name="Engstrom P."/>
            <person name="Fagiolini M."/>
            <person name="Faulkner G."/>
            <person name="Fletcher C.F."/>
            <person name="Fukushima T."/>
            <person name="Furuno M."/>
            <person name="Futaki S."/>
            <person name="Gariboldi M."/>
            <person name="Georgii-Hemming P."/>
            <person name="Gingeras T.R."/>
            <person name="Gojobori T."/>
            <person name="Green R.E."/>
            <person name="Gustincich S."/>
            <person name="Harbers M."/>
            <person name="Hayashi Y."/>
            <person name="Hensch T.K."/>
            <person name="Hirokawa N."/>
            <person name="Hill D."/>
            <person name="Huminiecki L."/>
            <person name="Iacono M."/>
            <person name="Ikeo K."/>
            <person name="Iwama A."/>
            <person name="Ishikawa T."/>
            <person name="Jakt M."/>
            <person name="Kanapin A."/>
            <person name="Katoh M."/>
            <person name="Kawasawa Y."/>
            <person name="Kelso J."/>
            <person name="Kitamura H."/>
            <person name="Kitano H."/>
            <person name="Kollias G."/>
            <person name="Krishnan S.P."/>
            <person name="Kruger A."/>
            <person name="Kummerfeld S.K."/>
            <person name="Kurochkin I.V."/>
            <person name="Lareau L.F."/>
            <person name="Lazarevic D."/>
            <person name="Lipovich L."/>
            <person name="Liu J."/>
            <person name="Liuni S."/>
            <person name="McWilliam S."/>
            <person name="Madan Babu M."/>
            <person name="Madera M."/>
            <person name="Marchionni L."/>
            <person name="Matsuda H."/>
            <person name="Matsuzawa S."/>
            <person name="Miki H."/>
            <person name="Mignone F."/>
            <person name="Miyake S."/>
            <person name="Morris K."/>
            <person name="Mottagui-Tabar S."/>
            <person name="Mulder N."/>
            <person name="Nakano N."/>
            <person name="Nakauchi H."/>
            <person name="Ng P."/>
            <person name="Nilsson R."/>
            <person name="Nishiguchi S."/>
            <person name="Nishikawa S."/>
            <person name="Nori F."/>
            <person name="Ohara O."/>
            <person name="Okazaki Y."/>
            <person name="Orlando V."/>
            <person name="Pang K.C."/>
            <person name="Pavan W.J."/>
            <person name="Pavesi G."/>
            <person name="Pesole G."/>
            <person name="Petrovsky N."/>
            <person name="Piazza S."/>
            <person name="Reed J."/>
            <person name="Reid J.F."/>
            <person name="Ring B.Z."/>
            <person name="Ringwald M."/>
            <person name="Rost B."/>
            <person name="Ruan Y."/>
            <person name="Salzberg S.L."/>
            <person name="Sandelin A."/>
            <person name="Schneider C."/>
            <person name="Schoenbach C."/>
            <person name="Sekiguchi K."/>
            <person name="Semple C.A."/>
            <person name="Seno S."/>
            <person name="Sessa L."/>
            <person name="Sheng Y."/>
            <person name="Shibata Y."/>
            <person name="Shimada H."/>
            <person name="Shimada K."/>
            <person name="Silva D."/>
            <person name="Sinclair B."/>
            <person name="Sperling S."/>
            <person name="Stupka E."/>
            <person name="Sugiura K."/>
            <person name="Sultana R."/>
            <person name="Takenaka Y."/>
            <person name="Taki K."/>
            <person name="Tammoja K."/>
            <person name="Tan S.L."/>
            <person name="Tang S."/>
            <person name="Taylor M.S."/>
            <person name="Tegner J."/>
            <person name="Teichmann S.A."/>
            <person name="Ueda H.R."/>
            <person name="van Nimwegen E."/>
            <person name="Verardo R."/>
            <person name="Wei C.L."/>
            <person name="Yagi K."/>
            <person name="Yamanishi H."/>
            <person name="Zabarovsky E."/>
            <person name="Zhu S."/>
            <person name="Zimmer A."/>
            <person name="Hide W."/>
            <person name="Bult C."/>
            <person name="Grimmond S.M."/>
            <person name="Teasdale R.D."/>
            <person name="Liu E.T."/>
            <person name="Brusic V."/>
            <person name="Quackenbush J."/>
            <person name="Wahlestedt C."/>
            <person name="Mattick J.S."/>
            <person name="Hume D.A."/>
            <person name="Kai C."/>
            <person name="Sasaki D."/>
            <person name="Tomaru Y."/>
            <person name="Fukuda S."/>
            <person name="Kanamori-Katayama M."/>
            <person name="Suzuki M."/>
            <person name="Aoki J."/>
            <person name="Arakawa T."/>
            <person name="Iida J."/>
            <person name="Imamura K."/>
            <person name="Itoh M."/>
            <person name="Kato T."/>
            <person name="Kawaji H."/>
            <person name="Kawagashira N."/>
            <person name="Kawashima T."/>
            <person name="Kojima M."/>
            <person name="Kondo S."/>
            <person name="Konno H."/>
            <person name="Nakano K."/>
            <person name="Ninomiya N."/>
            <person name="Nishio T."/>
            <person name="Okada M."/>
            <person name="Plessy C."/>
            <person name="Shibata K."/>
            <person name="Shiraki T."/>
            <person name="Suzuki S."/>
            <person name="Tagami M."/>
            <person name="Waki K."/>
            <person name="Watahiki A."/>
            <person name="Okamura-Oho Y."/>
            <person name="Suzuki H."/>
            <person name="Kawai J."/>
            <person name="Hayashizaki Y."/>
        </authorList>
    </citation>
    <scope>NUCLEOTIDE SEQUENCE [LARGE SCALE MRNA]</scope>
    <source>
        <strain>C57BL/6J</strain>
        <tissue>Embryo</tissue>
        <tissue>Placenta</tissue>
    </source>
</reference>
<reference key="2">
    <citation type="journal article" date="2004" name="Genome Res.">
        <title>The status, quality, and expansion of the NIH full-length cDNA project: the Mammalian Gene Collection (MGC).</title>
        <authorList>
            <consortium name="The MGC Project Team"/>
        </authorList>
    </citation>
    <scope>NUCLEOTIDE SEQUENCE [LARGE SCALE MRNA]</scope>
    <source>
        <strain>FVB/N</strain>
        <tissue>Liver</tissue>
    </source>
</reference>
<reference key="3">
    <citation type="journal article" date="2007" name="Mol. Cell. Proteomics">
        <title>Proteomics characterization of mouse kidney peroxisomes by tandem mass spectrometry and protein correlation profiling.</title>
        <authorList>
            <person name="Wiese S."/>
            <person name="Gronemeyer T."/>
            <person name="Ofman R."/>
            <person name="Kunze M."/>
            <person name="Grou C.P."/>
            <person name="Almeida J.A."/>
            <person name="Eisenacher M."/>
            <person name="Stephan C."/>
            <person name="Hayen H."/>
            <person name="Schollenberger L."/>
            <person name="Korosec T."/>
            <person name="Waterham H.R."/>
            <person name="Schliebs W."/>
            <person name="Erdmann R."/>
            <person name="Berger J."/>
            <person name="Meyer H.E."/>
            <person name="Just W."/>
            <person name="Azevedo J.E."/>
            <person name="Wanders R.J."/>
            <person name="Warscheid B."/>
        </authorList>
    </citation>
    <scope>SUBCELLULAR LOCATION</scope>
    <source>
        <tissue>Kidney</tissue>
    </source>
</reference>
<reference key="4">
    <citation type="journal article" date="2007" name="Proc. Natl. Acad. Sci. U.S.A.">
        <title>Large-scale phosphorylation analysis of mouse liver.</title>
        <authorList>
            <person name="Villen J."/>
            <person name="Beausoleil S.A."/>
            <person name="Gerber S.A."/>
            <person name="Gygi S.P."/>
        </authorList>
    </citation>
    <scope>PHOSPHORYLATION [LARGE SCALE ANALYSIS] AT SER-210 AND TYR-323</scope>
    <scope>IDENTIFICATION BY MASS SPECTROMETRY [LARGE SCALE ANALYSIS]</scope>
    <source>
        <tissue>Liver</tissue>
    </source>
</reference>
<reference key="5">
    <citation type="journal article" date="2010" name="Cell">
        <title>A tissue-specific atlas of mouse protein phosphorylation and expression.</title>
        <authorList>
            <person name="Huttlin E.L."/>
            <person name="Jedrychowski M.P."/>
            <person name="Elias J.E."/>
            <person name="Goswami T."/>
            <person name="Rad R."/>
            <person name="Beausoleil S.A."/>
            <person name="Villen J."/>
            <person name="Haas W."/>
            <person name="Sowa M.E."/>
            <person name="Gygi S.P."/>
        </authorList>
    </citation>
    <scope>IDENTIFICATION BY MASS SPECTROMETRY [LARGE SCALE ANALYSIS]</scope>
    <source>
        <tissue>Brown adipose tissue</tissue>
        <tissue>Heart</tissue>
        <tissue>Kidney</tissue>
        <tissue>Liver</tissue>
        <tissue>Pancreas</tissue>
    </source>
</reference>
<reference key="6">
    <citation type="journal article" date="2013" name="Mol. Cell">
        <title>SIRT5-mediated lysine desuccinylation impacts diverse metabolic pathways.</title>
        <authorList>
            <person name="Park J."/>
            <person name="Chen Y."/>
            <person name="Tishkoff D.X."/>
            <person name="Peng C."/>
            <person name="Tan M."/>
            <person name="Dai L."/>
            <person name="Xie Z."/>
            <person name="Zhang Y."/>
            <person name="Zwaans B.M."/>
            <person name="Skinner M.E."/>
            <person name="Lombard D.B."/>
            <person name="Zhao Y."/>
        </authorList>
    </citation>
    <scope>SUCCINYLATION [LARGE SCALE ANALYSIS] AT LYS-368 AND LYS-390</scope>
    <scope>IDENTIFICATION BY MASS SPECTROMETRY [LARGE SCALE ANALYSIS]</scope>
    <source>
        <tissue>Liver</tissue>
    </source>
</reference>
<reference key="7">
    <citation type="journal article" date="2013" name="Proc. Natl. Acad. Sci. U.S.A.">
        <title>Label-free quantitative proteomics of the lysine acetylome in mitochondria identifies substrates of SIRT3 in metabolic pathways.</title>
        <authorList>
            <person name="Rardin M.J."/>
            <person name="Newman J.C."/>
            <person name="Held J.M."/>
            <person name="Cusack M.P."/>
            <person name="Sorensen D.J."/>
            <person name="Li B."/>
            <person name="Schilling B."/>
            <person name="Mooney S.D."/>
            <person name="Kahn C.R."/>
            <person name="Verdin E."/>
            <person name="Gibson B.W."/>
        </authorList>
    </citation>
    <scope>ACETYLATION [LARGE SCALE ANALYSIS] AT LYS-163; LYS-166; LYS-175 AND LYS-765</scope>
    <scope>IDENTIFICATION BY MASS SPECTROMETRY [LARGE SCALE ANALYSIS]</scope>
    <source>
        <tissue>Liver</tissue>
    </source>
</reference>
<keyword id="KW-0007">Acetylation</keyword>
<keyword id="KW-0274">FAD</keyword>
<keyword id="KW-0276">Fatty acid metabolism</keyword>
<keyword id="KW-0285">Flavoprotein</keyword>
<keyword id="KW-0443">Lipid metabolism</keyword>
<keyword id="KW-0472">Membrane</keyword>
<keyword id="KW-0496">Mitochondrion</keyword>
<keyword id="KW-0560">Oxidoreductase</keyword>
<keyword id="KW-0576">Peroxisome</keyword>
<keyword id="KW-0597">Phosphoprotein</keyword>
<keyword id="KW-1185">Reference proteome</keyword>
<proteinExistence type="evidence at protein level"/>
<feature type="chain" id="PRO_0000254146" description="Acyl-CoA dehydrogenase family member 11">
    <location>
        <begin position="1"/>
        <end position="779"/>
    </location>
</feature>
<feature type="binding site" description="in other chain" evidence="1">
    <location>
        <begin position="503"/>
        <end position="513"/>
    </location>
    <ligand>
        <name>FAD</name>
        <dbReference type="ChEBI" id="CHEBI:57692"/>
        <note>ligand shared between dimeric partners</note>
    </ligand>
</feature>
<feature type="binding site" description="in other chain" evidence="1">
    <location>
        <begin position="511"/>
        <end position="513"/>
    </location>
    <ligand>
        <name>FAD</name>
        <dbReference type="ChEBI" id="CHEBI:57692"/>
        <note>ligand shared between dimeric partners</note>
    </ligand>
</feature>
<feature type="binding site" evidence="1">
    <location>
        <position position="513"/>
    </location>
    <ligand>
        <name>substrate</name>
    </ligand>
</feature>
<feature type="binding site" description="in other chain" evidence="1">
    <location>
        <begin position="537"/>
        <end position="539"/>
    </location>
    <ligand>
        <name>FAD</name>
        <dbReference type="ChEBI" id="CHEBI:57692"/>
        <note>ligand shared between dimeric partners</note>
    </ligand>
</feature>
<feature type="binding site" description="in other chain" evidence="1">
    <location>
        <position position="539"/>
    </location>
    <ligand>
        <name>FAD</name>
        <dbReference type="ChEBI" id="CHEBI:57692"/>
        <note>ligand shared between dimeric partners</note>
    </ligand>
</feature>
<feature type="binding site" evidence="1">
    <location>
        <begin position="628"/>
        <end position="631"/>
    </location>
    <ligand>
        <name>substrate</name>
    </ligand>
</feature>
<feature type="binding site" evidence="1">
    <location>
        <position position="656"/>
    </location>
    <ligand>
        <name>FAD</name>
        <dbReference type="ChEBI" id="CHEBI:57692"/>
        <note>ligand shared between dimeric partners</note>
    </ligand>
</feature>
<feature type="binding site" evidence="1">
    <location>
        <begin position="726"/>
        <end position="730"/>
    </location>
    <ligand>
        <name>FAD</name>
        <dbReference type="ChEBI" id="CHEBI:57692"/>
        <note>ligand shared between dimeric partners</note>
    </ligand>
</feature>
<feature type="binding site" description="in other chain" evidence="1">
    <location>
        <position position="726"/>
    </location>
    <ligand>
        <name>FAD</name>
        <dbReference type="ChEBI" id="CHEBI:57692"/>
        <note>ligand shared between dimeric partners</note>
    </ligand>
</feature>
<feature type="binding site" evidence="1">
    <location>
        <position position="754"/>
    </location>
    <ligand>
        <name>substrate</name>
    </ligand>
</feature>
<feature type="binding site" description="in other chain" evidence="1">
    <location>
        <begin position="755"/>
        <end position="757"/>
    </location>
    <ligand>
        <name>FAD</name>
        <dbReference type="ChEBI" id="CHEBI:57692"/>
        <note>ligand shared between dimeric partners</note>
    </ligand>
</feature>
<feature type="binding site" description="in other chain" evidence="1">
    <location>
        <position position="757"/>
    </location>
    <ligand>
        <name>FAD</name>
        <dbReference type="ChEBI" id="CHEBI:57692"/>
        <note>ligand shared between dimeric partners</note>
    </ligand>
</feature>
<feature type="modified residue" description="N6-acetyllysine" evidence="6">
    <location>
        <position position="163"/>
    </location>
</feature>
<feature type="modified residue" description="N6-acetyllysine" evidence="6">
    <location>
        <position position="166"/>
    </location>
</feature>
<feature type="modified residue" description="N6-acetyllysine" evidence="6">
    <location>
        <position position="175"/>
    </location>
</feature>
<feature type="modified residue" description="Phosphoserine" evidence="5">
    <location>
        <position position="210"/>
    </location>
</feature>
<feature type="modified residue" description="Phosphotyrosine" evidence="5">
    <location>
        <position position="323"/>
    </location>
</feature>
<feature type="modified residue" description="N6-succinyllysine" evidence="7">
    <location>
        <position position="368"/>
    </location>
</feature>
<feature type="modified residue" description="N6-succinyllysine" evidence="7">
    <location>
        <position position="390"/>
    </location>
</feature>
<feature type="modified residue" description="N6-acetyllysine" evidence="6">
    <location>
        <position position="765"/>
    </location>
</feature>
<feature type="sequence conflict" description="In Ref. 1; BAC36849/BAE26511/BAE26684." evidence="4" ref="1">
    <original>M</original>
    <variation>I</variation>
    <location>
        <position position="426"/>
    </location>
</feature>
<feature type="sequence conflict" description="In Ref. 2; AAH45199." evidence="4" ref="2">
    <original>T</original>
    <variation>M</variation>
    <location>
        <position position="555"/>
    </location>
</feature>
<comment type="function">
    <text evidence="2">Acyl-CoA dehydrogenase, that exhibits maximal activity towards saturated C22-CoA. Probably participates in beta-oxydation and energy production but could also play a role in the metabolism of specific fatty acids to control fatty acids composition of cellular lipids in brain.</text>
</comment>
<comment type="catalytic activity">
    <reaction evidence="2">
        <text>a 2,3-saturated acyl-CoA + oxidized [electron-transfer flavoprotein] + H(+) = a (2E)-enoyl-CoA + reduced [electron-transfer flavoprotein]</text>
        <dbReference type="Rhea" id="RHEA:44704"/>
        <dbReference type="Rhea" id="RHEA-COMP:10685"/>
        <dbReference type="Rhea" id="RHEA-COMP:10686"/>
        <dbReference type="ChEBI" id="CHEBI:15378"/>
        <dbReference type="ChEBI" id="CHEBI:57692"/>
        <dbReference type="ChEBI" id="CHEBI:58307"/>
        <dbReference type="ChEBI" id="CHEBI:58856"/>
        <dbReference type="ChEBI" id="CHEBI:65111"/>
    </reaction>
    <physiologicalReaction direction="left-to-right" evidence="2">
        <dbReference type="Rhea" id="RHEA:44705"/>
    </physiologicalReaction>
</comment>
<comment type="catalytic activity">
    <reaction evidence="2">
        <text>docosanoyl-CoA + oxidized [electron-transfer flavoprotein] + H(+) = (2E)-docosenoyl-CoA + reduced [electron-transfer flavoprotein]</text>
        <dbReference type="Rhea" id="RHEA:47228"/>
        <dbReference type="Rhea" id="RHEA-COMP:10685"/>
        <dbReference type="Rhea" id="RHEA-COMP:10686"/>
        <dbReference type="ChEBI" id="CHEBI:15378"/>
        <dbReference type="ChEBI" id="CHEBI:57692"/>
        <dbReference type="ChEBI" id="CHEBI:58307"/>
        <dbReference type="ChEBI" id="CHEBI:65059"/>
        <dbReference type="ChEBI" id="CHEBI:74692"/>
    </reaction>
    <physiologicalReaction direction="left-to-right" evidence="2">
        <dbReference type="Rhea" id="RHEA:47229"/>
    </physiologicalReaction>
</comment>
<comment type="catalytic activity">
    <reaction evidence="2">
        <text>tetracosanoyl-CoA + oxidized [electron-transfer flavoprotein] + H(+) = (2E)-tetracosenoyl-CoA + reduced [electron-transfer flavoprotein]</text>
        <dbReference type="Rhea" id="RHEA:47232"/>
        <dbReference type="Rhea" id="RHEA-COMP:10685"/>
        <dbReference type="Rhea" id="RHEA-COMP:10686"/>
        <dbReference type="ChEBI" id="CHEBI:15378"/>
        <dbReference type="ChEBI" id="CHEBI:57692"/>
        <dbReference type="ChEBI" id="CHEBI:58307"/>
        <dbReference type="ChEBI" id="CHEBI:65052"/>
        <dbReference type="ChEBI" id="CHEBI:74693"/>
    </reaction>
    <physiologicalReaction direction="left-to-right" evidence="2">
        <dbReference type="Rhea" id="RHEA:47233"/>
    </physiologicalReaction>
</comment>
<comment type="catalytic activity">
    <reaction evidence="2">
        <text>eicosanoyl-CoA + oxidized [electron-transfer flavoprotein] + H(+) = (2E)-eicosenoyl-CoA + reduced [electron-transfer flavoprotein]</text>
        <dbReference type="Rhea" id="RHEA:47236"/>
        <dbReference type="Rhea" id="RHEA-COMP:10685"/>
        <dbReference type="Rhea" id="RHEA-COMP:10686"/>
        <dbReference type="ChEBI" id="CHEBI:15378"/>
        <dbReference type="ChEBI" id="CHEBI:57380"/>
        <dbReference type="ChEBI" id="CHEBI:57692"/>
        <dbReference type="ChEBI" id="CHEBI:58307"/>
        <dbReference type="ChEBI" id="CHEBI:74691"/>
    </reaction>
    <physiologicalReaction direction="left-to-right" evidence="2">
        <dbReference type="Rhea" id="RHEA:47237"/>
    </physiologicalReaction>
</comment>
<comment type="catalytic activity">
    <reaction evidence="2">
        <text>hexacosanoyl-CoA + oxidized [electron-transfer flavoprotein] + H(+) = (2E)-hexacosenoyl-CoA + reduced [electron-transfer flavoprotein]</text>
        <dbReference type="Rhea" id="RHEA:48216"/>
        <dbReference type="Rhea" id="RHEA-COMP:10685"/>
        <dbReference type="Rhea" id="RHEA-COMP:10686"/>
        <dbReference type="ChEBI" id="CHEBI:15378"/>
        <dbReference type="ChEBI" id="CHEBI:57692"/>
        <dbReference type="ChEBI" id="CHEBI:58307"/>
        <dbReference type="ChEBI" id="CHEBI:64868"/>
        <dbReference type="ChEBI" id="CHEBI:74281"/>
    </reaction>
    <physiologicalReaction direction="left-to-right" evidence="2">
        <dbReference type="Rhea" id="RHEA:48217"/>
    </physiologicalReaction>
</comment>
<comment type="catalytic activity">
    <reaction evidence="2">
        <text>tricosanoyl-CoA + oxidized [electron-transfer flavoprotein] + H(+) = (2E)-tricosenoyl-CoA + reduced [electron-transfer flavoprotein]</text>
        <dbReference type="Rhea" id="RHEA:48220"/>
        <dbReference type="Rhea" id="RHEA-COMP:10685"/>
        <dbReference type="Rhea" id="RHEA-COMP:10686"/>
        <dbReference type="ChEBI" id="CHEBI:15378"/>
        <dbReference type="ChEBI" id="CHEBI:57692"/>
        <dbReference type="ChEBI" id="CHEBI:58307"/>
        <dbReference type="ChEBI" id="CHEBI:90118"/>
        <dbReference type="ChEBI" id="CHEBI:90119"/>
    </reaction>
    <physiologicalReaction direction="left-to-right" evidence="2">
        <dbReference type="Rhea" id="RHEA:48221"/>
    </physiologicalReaction>
</comment>
<comment type="cofactor">
    <cofactor evidence="2">
        <name>FAD</name>
        <dbReference type="ChEBI" id="CHEBI:57692"/>
    </cofactor>
</comment>
<comment type="pathway">
    <text evidence="2">Lipid metabolism; fatty acid beta-oxidation.</text>
</comment>
<comment type="subunit">
    <text evidence="2">Homodimer.</text>
</comment>
<comment type="subcellular location">
    <subcellularLocation>
        <location evidence="3">Peroxisome</location>
    </subcellularLocation>
    <subcellularLocation>
        <location evidence="2">Mitochondrion membrane</location>
    </subcellularLocation>
</comment>
<comment type="similarity">
    <text evidence="4">Belongs to the acyl-CoA dehydrogenase family.</text>
</comment>